<name>RS11_ECTM1</name>
<dbReference type="EMBL" id="CP000680">
    <property type="protein sequence ID" value="ABP86633.1"/>
    <property type="molecule type" value="Genomic_DNA"/>
</dbReference>
<dbReference type="SMR" id="A4XZ67"/>
<dbReference type="STRING" id="399739.Pmen_3886"/>
<dbReference type="KEGG" id="pmy:Pmen_3886"/>
<dbReference type="eggNOG" id="COG0100">
    <property type="taxonomic scope" value="Bacteria"/>
</dbReference>
<dbReference type="HOGENOM" id="CLU_072439_5_0_6"/>
<dbReference type="OrthoDB" id="9806415at2"/>
<dbReference type="GO" id="GO:1990904">
    <property type="term" value="C:ribonucleoprotein complex"/>
    <property type="evidence" value="ECO:0007669"/>
    <property type="project" value="UniProtKB-KW"/>
</dbReference>
<dbReference type="GO" id="GO:0005840">
    <property type="term" value="C:ribosome"/>
    <property type="evidence" value="ECO:0007669"/>
    <property type="project" value="UniProtKB-KW"/>
</dbReference>
<dbReference type="GO" id="GO:0019843">
    <property type="term" value="F:rRNA binding"/>
    <property type="evidence" value="ECO:0007669"/>
    <property type="project" value="UniProtKB-UniRule"/>
</dbReference>
<dbReference type="GO" id="GO:0003735">
    <property type="term" value="F:structural constituent of ribosome"/>
    <property type="evidence" value="ECO:0007669"/>
    <property type="project" value="InterPro"/>
</dbReference>
<dbReference type="GO" id="GO:0006412">
    <property type="term" value="P:translation"/>
    <property type="evidence" value="ECO:0007669"/>
    <property type="project" value="UniProtKB-UniRule"/>
</dbReference>
<dbReference type="FunFam" id="3.30.420.80:FF:000001">
    <property type="entry name" value="30S ribosomal protein S11"/>
    <property type="match status" value="1"/>
</dbReference>
<dbReference type="Gene3D" id="3.30.420.80">
    <property type="entry name" value="Ribosomal protein S11"/>
    <property type="match status" value="1"/>
</dbReference>
<dbReference type="HAMAP" id="MF_01310">
    <property type="entry name" value="Ribosomal_uS11"/>
    <property type="match status" value="1"/>
</dbReference>
<dbReference type="InterPro" id="IPR001971">
    <property type="entry name" value="Ribosomal_uS11"/>
</dbReference>
<dbReference type="InterPro" id="IPR019981">
    <property type="entry name" value="Ribosomal_uS11_bac-type"/>
</dbReference>
<dbReference type="InterPro" id="IPR018102">
    <property type="entry name" value="Ribosomal_uS11_CS"/>
</dbReference>
<dbReference type="InterPro" id="IPR036967">
    <property type="entry name" value="Ribosomal_uS11_sf"/>
</dbReference>
<dbReference type="NCBIfam" id="NF003698">
    <property type="entry name" value="PRK05309.1"/>
    <property type="match status" value="1"/>
</dbReference>
<dbReference type="NCBIfam" id="TIGR03632">
    <property type="entry name" value="uS11_bact"/>
    <property type="match status" value="1"/>
</dbReference>
<dbReference type="PANTHER" id="PTHR11759">
    <property type="entry name" value="40S RIBOSOMAL PROTEIN S14/30S RIBOSOMAL PROTEIN S11"/>
    <property type="match status" value="1"/>
</dbReference>
<dbReference type="Pfam" id="PF00411">
    <property type="entry name" value="Ribosomal_S11"/>
    <property type="match status" value="1"/>
</dbReference>
<dbReference type="PIRSF" id="PIRSF002131">
    <property type="entry name" value="Ribosomal_S11"/>
    <property type="match status" value="1"/>
</dbReference>
<dbReference type="SUPFAM" id="SSF53137">
    <property type="entry name" value="Translational machinery components"/>
    <property type="match status" value="1"/>
</dbReference>
<dbReference type="PROSITE" id="PS00054">
    <property type="entry name" value="RIBOSOMAL_S11"/>
    <property type="match status" value="1"/>
</dbReference>
<organism>
    <name type="scientific">Ectopseudomonas mendocina (strain ymp)</name>
    <name type="common">Pseudomonas mendocina</name>
    <dbReference type="NCBI Taxonomy" id="399739"/>
    <lineage>
        <taxon>Bacteria</taxon>
        <taxon>Pseudomonadati</taxon>
        <taxon>Pseudomonadota</taxon>
        <taxon>Gammaproteobacteria</taxon>
        <taxon>Pseudomonadales</taxon>
        <taxon>Pseudomonadaceae</taxon>
        <taxon>Ectopseudomonas</taxon>
    </lineage>
</organism>
<keyword id="KW-0687">Ribonucleoprotein</keyword>
<keyword id="KW-0689">Ribosomal protein</keyword>
<keyword id="KW-0694">RNA-binding</keyword>
<keyword id="KW-0699">rRNA-binding</keyword>
<sequence>MAKPAARTRKKVKKTVVDGIAHIHASFNNTIVTITDRQGNALSWATSGGSGFRGSRKSTPFAAQIAAERAGQAALEYGLKNLDVNVKGPGPGRESAVRALNACGYKIASITDVTPIPHNGCRPPKKRRV</sequence>
<evidence type="ECO:0000255" key="1">
    <source>
        <dbReference type="HAMAP-Rule" id="MF_01310"/>
    </source>
</evidence>
<evidence type="ECO:0000305" key="2"/>
<protein>
    <recommendedName>
        <fullName evidence="1">Small ribosomal subunit protein uS11</fullName>
    </recommendedName>
    <alternativeName>
        <fullName evidence="2">30S ribosomal protein S11</fullName>
    </alternativeName>
</protein>
<accession>A4XZ67</accession>
<reference key="1">
    <citation type="submission" date="2007-04" db="EMBL/GenBank/DDBJ databases">
        <title>Complete sequence of Pseudomonas mendocina ymp.</title>
        <authorList>
            <consortium name="US DOE Joint Genome Institute"/>
            <person name="Copeland A."/>
            <person name="Lucas S."/>
            <person name="Lapidus A."/>
            <person name="Barry K."/>
            <person name="Glavina del Rio T."/>
            <person name="Dalin E."/>
            <person name="Tice H."/>
            <person name="Pitluck S."/>
            <person name="Kiss H."/>
            <person name="Brettin T."/>
            <person name="Detter J.C."/>
            <person name="Bruce D."/>
            <person name="Han C."/>
            <person name="Schmutz J."/>
            <person name="Larimer F."/>
            <person name="Land M."/>
            <person name="Hauser L."/>
            <person name="Kyrpides N."/>
            <person name="Mikhailova N."/>
            <person name="Hersman L."/>
            <person name="Dubois J."/>
            <person name="Maurice P."/>
            <person name="Richardson P."/>
        </authorList>
    </citation>
    <scope>NUCLEOTIDE SEQUENCE [LARGE SCALE GENOMIC DNA]</scope>
    <source>
        <strain>ymp</strain>
    </source>
</reference>
<gene>
    <name evidence="1" type="primary">rpsK</name>
    <name type="ordered locus">Pmen_3886</name>
</gene>
<comment type="function">
    <text evidence="1">Located on the platform of the 30S subunit, it bridges several disparate RNA helices of the 16S rRNA. Forms part of the Shine-Dalgarno cleft in the 70S ribosome.</text>
</comment>
<comment type="subunit">
    <text evidence="1">Part of the 30S ribosomal subunit. Interacts with proteins S7 and S18. Binds to IF-3.</text>
</comment>
<comment type="similarity">
    <text evidence="1">Belongs to the universal ribosomal protein uS11 family.</text>
</comment>
<proteinExistence type="inferred from homology"/>
<feature type="chain" id="PRO_1000051845" description="Small ribosomal subunit protein uS11">
    <location>
        <begin position="1"/>
        <end position="129"/>
    </location>
</feature>